<organism>
    <name type="scientific">Saccharomyces cerevisiae (strain ATCC 204508 / S288c)</name>
    <name type="common">Baker's yeast</name>
    <dbReference type="NCBI Taxonomy" id="559292"/>
    <lineage>
        <taxon>Eukaryota</taxon>
        <taxon>Fungi</taxon>
        <taxon>Dikarya</taxon>
        <taxon>Ascomycota</taxon>
        <taxon>Saccharomycotina</taxon>
        <taxon>Saccharomycetes</taxon>
        <taxon>Saccharomycetales</taxon>
        <taxon>Saccharomycetaceae</taxon>
        <taxon>Saccharomyces</taxon>
    </lineage>
</organism>
<comment type="function">
    <text evidence="7">Controls the level of cAMP in yeast cells, together with the low-affinity cAMP phosphodiesterase (PDE1).</text>
</comment>
<comment type="catalytic activity">
    <reaction evidence="4">
        <text>3',5'-cyclic AMP + H2O = AMP + H(+)</text>
        <dbReference type="Rhea" id="RHEA:25277"/>
        <dbReference type="ChEBI" id="CHEBI:15377"/>
        <dbReference type="ChEBI" id="CHEBI:15378"/>
        <dbReference type="ChEBI" id="CHEBI:58165"/>
        <dbReference type="ChEBI" id="CHEBI:456215"/>
        <dbReference type="EC" id="3.1.4.53"/>
    </reaction>
    <physiologicalReaction direction="left-to-right" evidence="4">
        <dbReference type="Rhea" id="RHEA:25278"/>
    </physiologicalReaction>
</comment>
<comment type="cofactor">
    <cofactor evidence="1">
        <name>a divalent metal cation</name>
        <dbReference type="ChEBI" id="CHEBI:60240"/>
    </cofactor>
    <text evidence="1">Binds 2 divalent metal cations per subunit. Site 1 may preferentially bind zinc ions, while site 2 has a preference for magnesium and/or manganese ions.</text>
</comment>
<comment type="subunit">
    <text>Monomer.</text>
</comment>
<comment type="miscellaneous">
    <text evidence="3">Present with 6510 molecules/cell in log phase SD medium.</text>
</comment>
<comment type="similarity">
    <text evidence="6">Belongs to the cyclic nucleotide phosphodiesterase family.</text>
</comment>
<accession>P06776</accession>
<accession>D6W355</accession>
<accession>Q08836</accession>
<dbReference type="EC" id="3.1.4.53" evidence="4"/>
<dbReference type="EMBL" id="M14563">
    <property type="protein sequence ID" value="AAA34846.1"/>
    <property type="molecule type" value="Genomic_DNA"/>
</dbReference>
<dbReference type="EMBL" id="Z75268">
    <property type="protein sequence ID" value="CAA99689.1"/>
    <property type="molecule type" value="Genomic_DNA"/>
</dbReference>
<dbReference type="EMBL" id="BK006948">
    <property type="protein sequence ID" value="DAA11121.1"/>
    <property type="molecule type" value="Genomic_DNA"/>
</dbReference>
<dbReference type="PIR" id="S67272">
    <property type="entry name" value="S67272"/>
</dbReference>
<dbReference type="RefSeq" id="NP_015005.1">
    <property type="nucleotide sequence ID" value="NM_001183780.1"/>
</dbReference>
<dbReference type="SMR" id="P06776"/>
<dbReference type="BioGRID" id="34745">
    <property type="interactions" value="641"/>
</dbReference>
<dbReference type="DIP" id="DIP-4055N"/>
<dbReference type="FunCoup" id="P06776">
    <property type="interactions" value="176"/>
</dbReference>
<dbReference type="IntAct" id="P06776">
    <property type="interactions" value="5"/>
</dbReference>
<dbReference type="MINT" id="P06776"/>
<dbReference type="STRING" id="4932.YOR360C"/>
<dbReference type="iPTMnet" id="P06776"/>
<dbReference type="PaxDb" id="4932-YOR360C"/>
<dbReference type="PeptideAtlas" id="P06776"/>
<dbReference type="EnsemblFungi" id="YOR360C_mRNA">
    <property type="protein sequence ID" value="YOR360C"/>
    <property type="gene ID" value="YOR360C"/>
</dbReference>
<dbReference type="GeneID" id="854542"/>
<dbReference type="KEGG" id="sce:YOR360C"/>
<dbReference type="AGR" id="SGD:S000005887"/>
<dbReference type="SGD" id="S000005887">
    <property type="gene designation" value="PDE2"/>
</dbReference>
<dbReference type="VEuPathDB" id="FungiDB:YOR360C"/>
<dbReference type="eggNOG" id="KOG3689">
    <property type="taxonomic scope" value="Eukaryota"/>
</dbReference>
<dbReference type="HOGENOM" id="CLU_028903_0_0_1"/>
<dbReference type="InParanoid" id="P06776"/>
<dbReference type="OMA" id="KFHNFRH"/>
<dbReference type="OrthoDB" id="546632at2759"/>
<dbReference type="BioCyc" id="YEAST:YOR360C-MONOMER"/>
<dbReference type="Reactome" id="R-SCE-418457">
    <property type="pathway name" value="cGMP effects"/>
</dbReference>
<dbReference type="BioGRID-ORCS" id="854542">
    <property type="hits" value="0 hits in 10 CRISPR screens"/>
</dbReference>
<dbReference type="PRO" id="PR:P06776"/>
<dbReference type="Proteomes" id="UP000002311">
    <property type="component" value="Chromosome XV"/>
</dbReference>
<dbReference type="RNAct" id="P06776">
    <property type="molecule type" value="protein"/>
</dbReference>
<dbReference type="GO" id="GO:0005737">
    <property type="term" value="C:cytoplasm"/>
    <property type="evidence" value="ECO:0007005"/>
    <property type="project" value="SGD"/>
</dbReference>
<dbReference type="GO" id="GO:0005634">
    <property type="term" value="C:nucleus"/>
    <property type="evidence" value="ECO:0007005"/>
    <property type="project" value="SGD"/>
</dbReference>
<dbReference type="GO" id="GO:0004115">
    <property type="term" value="F:3',5'-cyclic-AMP phosphodiesterase activity"/>
    <property type="evidence" value="ECO:0000314"/>
    <property type="project" value="SGD"/>
</dbReference>
<dbReference type="GO" id="GO:0047555">
    <property type="term" value="F:3',5'-cyclic-GMP phosphodiesterase activity"/>
    <property type="evidence" value="ECO:0000318"/>
    <property type="project" value="GO_Central"/>
</dbReference>
<dbReference type="GO" id="GO:0046872">
    <property type="term" value="F:metal ion binding"/>
    <property type="evidence" value="ECO:0007669"/>
    <property type="project" value="UniProtKB-KW"/>
</dbReference>
<dbReference type="GO" id="GO:0007189">
    <property type="term" value="P:adenylate cyclase-activating G protein-coupled receptor signaling pathway"/>
    <property type="evidence" value="ECO:0000315"/>
    <property type="project" value="SGD"/>
</dbReference>
<dbReference type="GO" id="GO:0019933">
    <property type="term" value="P:cAMP-mediated signaling"/>
    <property type="evidence" value="ECO:0000318"/>
    <property type="project" value="GO_Central"/>
</dbReference>
<dbReference type="CDD" id="cd00077">
    <property type="entry name" value="HDc"/>
    <property type="match status" value="1"/>
</dbReference>
<dbReference type="FunFam" id="1.10.1300.10:FF:000024">
    <property type="entry name" value="Phosphodiesterase"/>
    <property type="match status" value="1"/>
</dbReference>
<dbReference type="Gene3D" id="1.10.1300.10">
    <property type="entry name" value="3'5'-cyclic nucleotide phosphodiesterase, catalytic domain"/>
    <property type="match status" value="1"/>
</dbReference>
<dbReference type="InterPro" id="IPR003607">
    <property type="entry name" value="HD/PDEase_dom"/>
</dbReference>
<dbReference type="InterPro" id="IPR023088">
    <property type="entry name" value="PDEase"/>
</dbReference>
<dbReference type="InterPro" id="IPR002073">
    <property type="entry name" value="PDEase_catalytic_dom"/>
</dbReference>
<dbReference type="InterPro" id="IPR036971">
    <property type="entry name" value="PDEase_catalytic_dom_sf"/>
</dbReference>
<dbReference type="InterPro" id="IPR023174">
    <property type="entry name" value="PDEase_CS"/>
</dbReference>
<dbReference type="PANTHER" id="PTHR11347">
    <property type="entry name" value="CYCLIC NUCLEOTIDE PHOSPHODIESTERASE"/>
    <property type="match status" value="1"/>
</dbReference>
<dbReference type="Pfam" id="PF00233">
    <property type="entry name" value="PDEase_I"/>
    <property type="match status" value="1"/>
</dbReference>
<dbReference type="PRINTS" id="PR00387">
    <property type="entry name" value="PDIESTERASE1"/>
</dbReference>
<dbReference type="SMART" id="SM00471">
    <property type="entry name" value="HDc"/>
    <property type="match status" value="1"/>
</dbReference>
<dbReference type="SUPFAM" id="SSF109604">
    <property type="entry name" value="HD-domain/PDEase-like"/>
    <property type="match status" value="1"/>
</dbReference>
<dbReference type="PROSITE" id="PS00126">
    <property type="entry name" value="PDEASE_I_1"/>
    <property type="match status" value="1"/>
</dbReference>
<dbReference type="PROSITE" id="PS51845">
    <property type="entry name" value="PDEASE_I_2"/>
    <property type="match status" value="1"/>
</dbReference>
<keyword id="KW-0114">cAMP</keyword>
<keyword id="KW-0378">Hydrolase</keyword>
<keyword id="KW-0479">Metal-binding</keyword>
<keyword id="KW-1185">Reference proteome</keyword>
<proteinExistence type="evidence at protein level"/>
<protein>
    <recommendedName>
        <fullName evidence="6">3',5'-cyclic-nucleotide phosphodiesterase 2</fullName>
        <shortName>PDEase 2</shortName>
        <ecNumber evidence="4">3.1.4.53</ecNumber>
    </recommendedName>
    <alternativeName>
        <fullName evidence="5">High-affinity cAMP phosphodiesterase</fullName>
    </alternativeName>
</protein>
<sequence length="526" mass="61000">MSTLFLIGIHEIEKSQTIVQNEHYFDRVIELQDLDSLMVALYKDRVSPFPNVHNFETGVSIVLYDPSKFQLSVRQLDVLFKRFFPSFNISAIDHTREENLQRLECVERENSICRNRITRINHWMYHHHDDTPDGINKNSYGTVNGNSVPTQACEANIYTLLLHLNDSKAQHLRKASVPRLIRNIEFMSFLSDPIEKISQEGSHYWNILSTWDFCALSLSTQELIWCGFTLIKKLSKDAKVLIADNKLLLLLFTLESSYHQVNKFHNFRHAIDVMQATWRLCTYLLKDNPVQTLLLCMAAIGHDVGHPGTNNQLLCNCESEVAQNFKNVSILENFHRELFQQLLSEHWPQLLSISKKKFDFISEAILATDMALHSQYEDRLMHENPMKQITLISLIIKAADISNVTRTLSISARWAYLITLEFNDCALLETFHKAHRPEQDCFGDSYKNVDSPKEDLESIQNILVNVTDPDDIIKDHPHIPNGQIFFINTFAEVFFNALSQKFSGLKFLSDNVKINKEYWMKHKKPQ</sequence>
<feature type="chain" id="PRO_0000198851" description="3',5'-cyclic-nucleotide phosphodiesterase 2">
    <location>
        <begin position="1"/>
        <end position="526"/>
    </location>
</feature>
<feature type="domain" description="PDEase" evidence="2">
    <location>
        <begin position="182"/>
        <end position="526"/>
    </location>
</feature>
<feature type="active site" description="Proton donor" evidence="1">
    <location>
        <position position="265"/>
    </location>
</feature>
<feature type="binding site" evidence="1">
    <location>
        <position position="269"/>
    </location>
    <ligand>
        <name>a divalent metal cation</name>
        <dbReference type="ChEBI" id="CHEBI:60240"/>
        <label>1</label>
    </ligand>
</feature>
<feature type="binding site" evidence="1">
    <location>
        <position position="302"/>
    </location>
    <ligand>
        <name>a divalent metal cation</name>
        <dbReference type="ChEBI" id="CHEBI:60240"/>
        <label>1</label>
    </ligand>
</feature>
<feature type="binding site" evidence="1">
    <location>
        <position position="303"/>
    </location>
    <ligand>
        <name>a divalent metal cation</name>
        <dbReference type="ChEBI" id="CHEBI:60240"/>
        <label>1</label>
    </ligand>
</feature>
<feature type="binding site" evidence="1">
    <location>
        <position position="303"/>
    </location>
    <ligand>
        <name>a divalent metal cation</name>
        <dbReference type="ChEBI" id="CHEBI:60240"/>
        <label>2</label>
    </ligand>
</feature>
<feature type="binding site" evidence="1">
    <location>
        <position position="400"/>
    </location>
    <ligand>
        <name>a divalent metal cation</name>
        <dbReference type="ChEBI" id="CHEBI:60240"/>
        <label>1</label>
    </ligand>
</feature>
<feature type="sequence conflict" description="In Ref. 1; AAA34846." evidence="6" ref="1">
    <original>R</original>
    <variation>G</variation>
    <location>
        <position position="82"/>
    </location>
</feature>
<feature type="sequence conflict" description="In Ref. 1; AAA34846." evidence="6" ref="1">
    <original>QL</original>
    <variation>LK</variation>
    <location>
        <begin position="349"/>
        <end position="350"/>
    </location>
</feature>
<gene>
    <name evidence="5" type="primary">PDE2</name>
    <name type="synonym">SRA5</name>
    <name type="ordered locus">YOR360C</name>
</gene>
<evidence type="ECO:0000250" key="1"/>
<evidence type="ECO:0000255" key="2">
    <source>
        <dbReference type="PROSITE-ProRule" id="PRU01192"/>
    </source>
</evidence>
<evidence type="ECO:0000269" key="3">
    <source>
    </source>
</evidence>
<evidence type="ECO:0000269" key="4">
    <source>
    </source>
</evidence>
<evidence type="ECO:0000303" key="5">
    <source>
    </source>
</evidence>
<evidence type="ECO:0000305" key="6"/>
<evidence type="ECO:0000305" key="7">
    <source>
    </source>
</evidence>
<name>PDE2_YEAST</name>
<reference key="1">
    <citation type="journal article" date="1986" name="Proc. Natl. Acad. Sci. U.S.A.">
        <title>Cloning and characterization of the high-affinity cAMP phosphodiesterase of Saccharomyces cerevisiae.</title>
        <authorList>
            <person name="Sass P."/>
            <person name="Field J."/>
            <person name="Nikawa J."/>
            <person name="Toda T."/>
            <person name="Wigler M."/>
        </authorList>
    </citation>
    <scope>NUCLEOTIDE SEQUENCE [GENOMIC DNA]</scope>
    <scope>FUNCTION</scope>
    <scope>CATALYTIC ACTIVITY</scope>
</reference>
<reference key="2">
    <citation type="journal article" date="1997" name="Nature">
        <title>The nucleotide sequence of Saccharomyces cerevisiae chromosome XV.</title>
        <authorList>
            <person name="Dujon B."/>
            <person name="Albermann K."/>
            <person name="Aldea M."/>
            <person name="Alexandraki D."/>
            <person name="Ansorge W."/>
            <person name="Arino J."/>
            <person name="Benes V."/>
            <person name="Bohn C."/>
            <person name="Bolotin-Fukuhara M."/>
            <person name="Bordonne R."/>
            <person name="Boyer J."/>
            <person name="Camasses A."/>
            <person name="Casamayor A."/>
            <person name="Casas C."/>
            <person name="Cheret G."/>
            <person name="Cziepluch C."/>
            <person name="Daignan-Fornier B."/>
            <person name="Dang V.-D."/>
            <person name="de Haan M."/>
            <person name="Delius H."/>
            <person name="Durand P."/>
            <person name="Fairhead C."/>
            <person name="Feldmann H."/>
            <person name="Gaillon L."/>
            <person name="Galisson F."/>
            <person name="Gamo F.-J."/>
            <person name="Gancedo C."/>
            <person name="Goffeau A."/>
            <person name="Goulding S.E."/>
            <person name="Grivell L.A."/>
            <person name="Habbig B."/>
            <person name="Hand N.J."/>
            <person name="Hani J."/>
            <person name="Hattenhorst U."/>
            <person name="Hebling U."/>
            <person name="Hernando Y."/>
            <person name="Herrero E."/>
            <person name="Heumann K."/>
            <person name="Hiesel R."/>
            <person name="Hilger F."/>
            <person name="Hofmann B."/>
            <person name="Hollenberg C.P."/>
            <person name="Hughes B."/>
            <person name="Jauniaux J.-C."/>
            <person name="Kalogeropoulos A."/>
            <person name="Katsoulou C."/>
            <person name="Kordes E."/>
            <person name="Lafuente M.J."/>
            <person name="Landt O."/>
            <person name="Louis E.J."/>
            <person name="Maarse A.C."/>
            <person name="Madania A."/>
            <person name="Mannhaupt G."/>
            <person name="Marck C."/>
            <person name="Martin R.P."/>
            <person name="Mewes H.-W."/>
            <person name="Michaux G."/>
            <person name="Paces V."/>
            <person name="Parle-McDermott A.G."/>
            <person name="Pearson B.M."/>
            <person name="Perrin A."/>
            <person name="Pettersson B."/>
            <person name="Poch O."/>
            <person name="Pohl T.M."/>
            <person name="Poirey R."/>
            <person name="Portetelle D."/>
            <person name="Pujol A."/>
            <person name="Purnelle B."/>
            <person name="Ramezani Rad M."/>
            <person name="Rechmann S."/>
            <person name="Schwager C."/>
            <person name="Schweizer M."/>
            <person name="Sor F."/>
            <person name="Sterky F."/>
            <person name="Tarassov I.A."/>
            <person name="Teodoru C."/>
            <person name="Tettelin H."/>
            <person name="Thierry A."/>
            <person name="Tobiasch E."/>
            <person name="Tzermia M."/>
            <person name="Uhlen M."/>
            <person name="Unseld M."/>
            <person name="Valens M."/>
            <person name="Vandenbol M."/>
            <person name="Vetter I."/>
            <person name="Vlcek C."/>
            <person name="Voet M."/>
            <person name="Volckaert G."/>
            <person name="Voss H."/>
            <person name="Wambutt R."/>
            <person name="Wedler H."/>
            <person name="Wiemann S."/>
            <person name="Winsor B."/>
            <person name="Wolfe K.H."/>
            <person name="Zollner A."/>
            <person name="Zumstein E."/>
            <person name="Kleine K."/>
        </authorList>
    </citation>
    <scope>NUCLEOTIDE SEQUENCE [LARGE SCALE GENOMIC DNA]</scope>
    <source>
        <strain>ATCC 204508 / S288c</strain>
    </source>
</reference>
<reference key="3">
    <citation type="journal article" date="2014" name="G3 (Bethesda)">
        <title>The reference genome sequence of Saccharomyces cerevisiae: Then and now.</title>
        <authorList>
            <person name="Engel S.R."/>
            <person name="Dietrich F.S."/>
            <person name="Fisk D.G."/>
            <person name="Binkley G."/>
            <person name="Balakrishnan R."/>
            <person name="Costanzo M.C."/>
            <person name="Dwight S.S."/>
            <person name="Hitz B.C."/>
            <person name="Karra K."/>
            <person name="Nash R.S."/>
            <person name="Weng S."/>
            <person name="Wong E.D."/>
            <person name="Lloyd P."/>
            <person name="Skrzypek M.S."/>
            <person name="Miyasato S.R."/>
            <person name="Simison M."/>
            <person name="Cherry J.M."/>
        </authorList>
    </citation>
    <scope>GENOME REANNOTATION</scope>
    <source>
        <strain>ATCC 204508 / S288c</strain>
    </source>
</reference>
<reference key="4">
    <citation type="journal article" date="2003" name="Nature">
        <title>Global analysis of protein expression in yeast.</title>
        <authorList>
            <person name="Ghaemmaghami S."/>
            <person name="Huh W.-K."/>
            <person name="Bower K."/>
            <person name="Howson R.W."/>
            <person name="Belle A."/>
            <person name="Dephoure N."/>
            <person name="O'Shea E.K."/>
            <person name="Weissman J.S."/>
        </authorList>
    </citation>
    <scope>LEVEL OF PROTEIN EXPRESSION [LARGE SCALE ANALYSIS]</scope>
</reference>